<proteinExistence type="inferred from homology"/>
<keyword id="KW-0378">Hydrolase</keyword>
<keyword id="KW-0464">Manganese</keyword>
<keyword id="KW-1185">Reference proteome</keyword>
<name>ADEC2_RHIEC</name>
<evidence type="ECO:0000255" key="1">
    <source>
        <dbReference type="HAMAP-Rule" id="MF_01518"/>
    </source>
</evidence>
<comment type="catalytic activity">
    <reaction evidence="1">
        <text>adenine + H2O + H(+) = hypoxanthine + NH4(+)</text>
        <dbReference type="Rhea" id="RHEA:23688"/>
        <dbReference type="ChEBI" id="CHEBI:15377"/>
        <dbReference type="ChEBI" id="CHEBI:15378"/>
        <dbReference type="ChEBI" id="CHEBI:16708"/>
        <dbReference type="ChEBI" id="CHEBI:17368"/>
        <dbReference type="ChEBI" id="CHEBI:28938"/>
        <dbReference type="EC" id="3.5.4.2"/>
    </reaction>
</comment>
<comment type="cofactor">
    <cofactor evidence="1">
        <name>Mn(2+)</name>
        <dbReference type="ChEBI" id="CHEBI:29035"/>
    </cofactor>
</comment>
<comment type="similarity">
    <text evidence="1">Belongs to the metallo-dependent hydrolases superfamily. Adenine deaminase family.</text>
</comment>
<accession>Q2K4Q9</accession>
<sequence>MNAIARQEPFDLNDPALRARAVAAARGDAPFDMLITGGRLLDAVTGLIREADIGLVGALIASVHAPASRTDAVEIIDATGGILTPGLIDMHMHVESSMVTPAEYASAVLPHGVTTVVWDPHEFGNVQGLDGVRWAIEAARTLPLRMILLAPSCVPSAPGLELAGADFDAAVIAEMLRSPAVGGVAEVMNMRGVIDGDPRMSAIVNSGLASGKLVCGHARGLTGADLNAFMAAGVTSDHELTSGADLAAKLSAGLTIELRGSHDHLLQEFVEVLNGLGHLPATVTLCTDDVFPDELYQSGGLDEVARRLVRYGMKPEWALRAATFNAAQRLKRSDLGLVASGRRADLVLFEDLTELRARLVISDGRIVARNGSMEAAVQPLDTAPLINSTKLPPLTESDFRVPAKGARVRIATIDRPRFTQWGEAETEIRDGFVVPPAGSAMIAVAHRHGKAGGTPRIGFLTGWGEWRGAFCTTVSHDSHNLTVFGGDARDMALAANAVIKAGGGLAVAKDGAIQAILPLPLSGLVTDASLKDTASAFSDIRKAMDKIVDWKPPYRVFKACFGATLACNAGPHQTDRGIADVTTGKVLESPVLEIF</sequence>
<feature type="chain" id="PRO_0000292393" description="Adenine deaminase 2">
    <location>
        <begin position="1"/>
        <end position="595"/>
    </location>
</feature>
<protein>
    <recommendedName>
        <fullName evidence="1">Adenine deaminase 2</fullName>
        <shortName evidence="1">Adenase 2</shortName>
        <shortName evidence="1">Adenine aminase 2</shortName>
        <ecNumber evidence="1">3.5.4.2</ecNumber>
    </recommendedName>
</protein>
<gene>
    <name evidence="1" type="primary">ade2</name>
    <name type="synonym">adeC2</name>
    <name type="ordered locus">RHE_CH03420</name>
</gene>
<dbReference type="EC" id="3.5.4.2" evidence="1"/>
<dbReference type="EMBL" id="CP000133">
    <property type="protein sequence ID" value="ABC92177.1"/>
    <property type="molecule type" value="Genomic_DNA"/>
</dbReference>
<dbReference type="RefSeq" id="WP_011426646.1">
    <property type="nucleotide sequence ID" value="NC_007761.1"/>
</dbReference>
<dbReference type="SMR" id="Q2K4Q9"/>
<dbReference type="KEGG" id="ret:RHE_CH03420"/>
<dbReference type="eggNOG" id="COG1001">
    <property type="taxonomic scope" value="Bacteria"/>
</dbReference>
<dbReference type="HOGENOM" id="CLU_027935_0_0_5"/>
<dbReference type="OrthoDB" id="9775607at2"/>
<dbReference type="Proteomes" id="UP000001936">
    <property type="component" value="Chromosome"/>
</dbReference>
<dbReference type="GO" id="GO:0000034">
    <property type="term" value="F:adenine deaminase activity"/>
    <property type="evidence" value="ECO:0007669"/>
    <property type="project" value="UniProtKB-UniRule"/>
</dbReference>
<dbReference type="GO" id="GO:0006146">
    <property type="term" value="P:adenine catabolic process"/>
    <property type="evidence" value="ECO:0007669"/>
    <property type="project" value="InterPro"/>
</dbReference>
<dbReference type="Gene3D" id="3.20.20.140">
    <property type="entry name" value="Metal-dependent hydrolases"/>
    <property type="match status" value="1"/>
</dbReference>
<dbReference type="Gene3D" id="2.30.40.10">
    <property type="entry name" value="Urease, subunit C, domain 1"/>
    <property type="match status" value="1"/>
</dbReference>
<dbReference type="HAMAP" id="MF_01518">
    <property type="entry name" value="Adenine_deamin"/>
    <property type="match status" value="1"/>
</dbReference>
<dbReference type="InterPro" id="IPR006679">
    <property type="entry name" value="Adenine_deam"/>
</dbReference>
<dbReference type="InterPro" id="IPR026912">
    <property type="entry name" value="Adenine_deam_C"/>
</dbReference>
<dbReference type="InterPro" id="IPR006680">
    <property type="entry name" value="Amidohydro-rel"/>
</dbReference>
<dbReference type="InterPro" id="IPR011059">
    <property type="entry name" value="Metal-dep_hydrolase_composite"/>
</dbReference>
<dbReference type="InterPro" id="IPR032466">
    <property type="entry name" value="Metal_Hydrolase"/>
</dbReference>
<dbReference type="PANTHER" id="PTHR11113:SF2">
    <property type="entry name" value="ADENINE DEAMINASE"/>
    <property type="match status" value="1"/>
</dbReference>
<dbReference type="PANTHER" id="PTHR11113">
    <property type="entry name" value="N-ACETYLGLUCOSAMINE-6-PHOSPHATE DEACETYLASE"/>
    <property type="match status" value="1"/>
</dbReference>
<dbReference type="Pfam" id="PF13382">
    <property type="entry name" value="Adenine_deam_C"/>
    <property type="match status" value="1"/>
</dbReference>
<dbReference type="Pfam" id="PF01979">
    <property type="entry name" value="Amidohydro_1"/>
    <property type="match status" value="1"/>
</dbReference>
<dbReference type="SUPFAM" id="SSF51338">
    <property type="entry name" value="Composite domain of metallo-dependent hydrolases"/>
    <property type="match status" value="1"/>
</dbReference>
<dbReference type="SUPFAM" id="SSF51556">
    <property type="entry name" value="Metallo-dependent hydrolases"/>
    <property type="match status" value="1"/>
</dbReference>
<reference key="1">
    <citation type="journal article" date="2006" name="Proc. Natl. Acad. Sci. U.S.A.">
        <title>The partitioned Rhizobium etli genome: genetic and metabolic redundancy in seven interacting replicons.</title>
        <authorList>
            <person name="Gonzalez V."/>
            <person name="Santamaria R.I."/>
            <person name="Bustos P."/>
            <person name="Hernandez-Gonzalez I."/>
            <person name="Medrano-Soto A."/>
            <person name="Moreno-Hagelsieb G."/>
            <person name="Janga S.C."/>
            <person name="Ramirez M.A."/>
            <person name="Jimenez-Jacinto V."/>
            <person name="Collado-Vides J."/>
            <person name="Davila G."/>
        </authorList>
    </citation>
    <scope>NUCLEOTIDE SEQUENCE [LARGE SCALE GENOMIC DNA]</scope>
    <source>
        <strain>ATCC 51251 / DSM 11541 / JCM 21823 / NBRC 15573 / CFN 42</strain>
    </source>
</reference>
<organism>
    <name type="scientific">Rhizobium etli (strain ATCC 51251 / DSM 11541 / JCM 21823 / NBRC 15573 / CFN 42)</name>
    <dbReference type="NCBI Taxonomy" id="347834"/>
    <lineage>
        <taxon>Bacteria</taxon>
        <taxon>Pseudomonadati</taxon>
        <taxon>Pseudomonadota</taxon>
        <taxon>Alphaproteobacteria</taxon>
        <taxon>Hyphomicrobiales</taxon>
        <taxon>Rhizobiaceae</taxon>
        <taxon>Rhizobium/Agrobacterium group</taxon>
        <taxon>Rhizobium</taxon>
    </lineage>
</organism>